<gene>
    <name evidence="1" type="primary">rpsG</name>
    <name type="ordered locus">RBE_1161</name>
</gene>
<reference key="1">
    <citation type="journal article" date="2006" name="PLoS Genet.">
        <title>Genome sequence of Rickettsia bellii illuminates the role of amoebae in gene exchanges between intracellular pathogens.</title>
        <authorList>
            <person name="Ogata H."/>
            <person name="La Scola B."/>
            <person name="Audic S."/>
            <person name="Renesto P."/>
            <person name="Blanc G."/>
            <person name="Robert C."/>
            <person name="Fournier P.-E."/>
            <person name="Claverie J.-M."/>
            <person name="Raoult D."/>
        </authorList>
    </citation>
    <scope>NUCLEOTIDE SEQUENCE [LARGE SCALE GENOMIC DNA]</scope>
    <source>
        <strain>RML369-C</strain>
    </source>
</reference>
<proteinExistence type="inferred from homology"/>
<name>RS7_RICBR</name>
<dbReference type="EMBL" id="CP000087">
    <property type="protein sequence ID" value="ABE05242.1"/>
    <property type="molecule type" value="Genomic_DNA"/>
</dbReference>
<dbReference type="RefSeq" id="WP_011477820.1">
    <property type="nucleotide sequence ID" value="NC_007940.1"/>
</dbReference>
<dbReference type="SMR" id="Q1RHC2"/>
<dbReference type="KEGG" id="rbe:RBE_1161"/>
<dbReference type="eggNOG" id="COG0049">
    <property type="taxonomic scope" value="Bacteria"/>
</dbReference>
<dbReference type="HOGENOM" id="CLU_072226_1_1_5"/>
<dbReference type="OrthoDB" id="9807653at2"/>
<dbReference type="Proteomes" id="UP000001951">
    <property type="component" value="Chromosome"/>
</dbReference>
<dbReference type="GO" id="GO:0015935">
    <property type="term" value="C:small ribosomal subunit"/>
    <property type="evidence" value="ECO:0007669"/>
    <property type="project" value="InterPro"/>
</dbReference>
<dbReference type="GO" id="GO:0019843">
    <property type="term" value="F:rRNA binding"/>
    <property type="evidence" value="ECO:0007669"/>
    <property type="project" value="UniProtKB-UniRule"/>
</dbReference>
<dbReference type="GO" id="GO:0003735">
    <property type="term" value="F:structural constituent of ribosome"/>
    <property type="evidence" value="ECO:0007669"/>
    <property type="project" value="InterPro"/>
</dbReference>
<dbReference type="GO" id="GO:0000049">
    <property type="term" value="F:tRNA binding"/>
    <property type="evidence" value="ECO:0007669"/>
    <property type="project" value="UniProtKB-UniRule"/>
</dbReference>
<dbReference type="GO" id="GO:0006412">
    <property type="term" value="P:translation"/>
    <property type="evidence" value="ECO:0007669"/>
    <property type="project" value="UniProtKB-UniRule"/>
</dbReference>
<dbReference type="CDD" id="cd14869">
    <property type="entry name" value="uS7_Bacteria"/>
    <property type="match status" value="1"/>
</dbReference>
<dbReference type="FunFam" id="1.10.455.10:FF:000001">
    <property type="entry name" value="30S ribosomal protein S7"/>
    <property type="match status" value="1"/>
</dbReference>
<dbReference type="Gene3D" id="1.10.455.10">
    <property type="entry name" value="Ribosomal protein S7 domain"/>
    <property type="match status" value="1"/>
</dbReference>
<dbReference type="HAMAP" id="MF_00480_B">
    <property type="entry name" value="Ribosomal_uS7_B"/>
    <property type="match status" value="1"/>
</dbReference>
<dbReference type="InterPro" id="IPR000235">
    <property type="entry name" value="Ribosomal_uS7"/>
</dbReference>
<dbReference type="InterPro" id="IPR005717">
    <property type="entry name" value="Ribosomal_uS7_bac/org-type"/>
</dbReference>
<dbReference type="InterPro" id="IPR020606">
    <property type="entry name" value="Ribosomal_uS7_CS"/>
</dbReference>
<dbReference type="InterPro" id="IPR023798">
    <property type="entry name" value="Ribosomal_uS7_dom"/>
</dbReference>
<dbReference type="InterPro" id="IPR036823">
    <property type="entry name" value="Ribosomal_uS7_dom_sf"/>
</dbReference>
<dbReference type="NCBIfam" id="TIGR01029">
    <property type="entry name" value="rpsG_bact"/>
    <property type="match status" value="1"/>
</dbReference>
<dbReference type="PANTHER" id="PTHR11205">
    <property type="entry name" value="RIBOSOMAL PROTEIN S7"/>
    <property type="match status" value="1"/>
</dbReference>
<dbReference type="Pfam" id="PF00177">
    <property type="entry name" value="Ribosomal_S7"/>
    <property type="match status" value="1"/>
</dbReference>
<dbReference type="PIRSF" id="PIRSF002122">
    <property type="entry name" value="RPS7p_RPS7a_RPS5e_RPS7o"/>
    <property type="match status" value="1"/>
</dbReference>
<dbReference type="SUPFAM" id="SSF47973">
    <property type="entry name" value="Ribosomal protein S7"/>
    <property type="match status" value="1"/>
</dbReference>
<dbReference type="PROSITE" id="PS00052">
    <property type="entry name" value="RIBOSOMAL_S7"/>
    <property type="match status" value="1"/>
</dbReference>
<comment type="function">
    <text evidence="1">One of the primary rRNA binding proteins, it binds directly to 16S rRNA where it nucleates assembly of the head domain of the 30S subunit. Is located at the subunit interface close to the decoding center, probably blocks exit of the E-site tRNA.</text>
</comment>
<comment type="subunit">
    <text evidence="1">Part of the 30S ribosomal subunit. Contacts proteins S9 and S11.</text>
</comment>
<comment type="similarity">
    <text evidence="1">Belongs to the universal ribosomal protein uS7 family.</text>
</comment>
<accession>Q1RHC2</accession>
<organism>
    <name type="scientific">Rickettsia bellii (strain RML369-C)</name>
    <dbReference type="NCBI Taxonomy" id="336407"/>
    <lineage>
        <taxon>Bacteria</taxon>
        <taxon>Pseudomonadati</taxon>
        <taxon>Pseudomonadota</taxon>
        <taxon>Alphaproteobacteria</taxon>
        <taxon>Rickettsiales</taxon>
        <taxon>Rickettsiaceae</taxon>
        <taxon>Rickettsieae</taxon>
        <taxon>Rickettsia</taxon>
        <taxon>belli group</taxon>
    </lineage>
</organism>
<protein>
    <recommendedName>
        <fullName evidence="1">Small ribosomal subunit protein uS7</fullName>
    </recommendedName>
    <alternativeName>
        <fullName evidence="2">30S ribosomal protein S7</fullName>
    </alternativeName>
</protein>
<feature type="chain" id="PRO_0000241774" description="Small ribosomal subunit protein uS7">
    <location>
        <begin position="1"/>
        <end position="163"/>
    </location>
</feature>
<evidence type="ECO:0000255" key="1">
    <source>
        <dbReference type="HAMAP-Rule" id="MF_00480"/>
    </source>
</evidence>
<evidence type="ECO:0000305" key="2"/>
<sequence>MSRRHAAEKRVILPDMKYNSVLLSRFINNIMKEGKKALAEKIVYSAFDKIEKKHKADPYQTFSNAMNNVKPYLEVTSVRVGGANYQVPTPVDERRGYALASRWIITAATKRSEKMMIDKLAEELFEASNNRGVAIKKKEDTHKMAEANKAFSHFSPKKTKQGN</sequence>
<keyword id="KW-0687">Ribonucleoprotein</keyword>
<keyword id="KW-0689">Ribosomal protein</keyword>
<keyword id="KW-0694">RNA-binding</keyword>
<keyword id="KW-0699">rRNA-binding</keyword>
<keyword id="KW-0820">tRNA-binding</keyword>